<organism>
    <name type="scientific">Escherichia coli (strain SMS-3-5 / SECEC)</name>
    <dbReference type="NCBI Taxonomy" id="439855"/>
    <lineage>
        <taxon>Bacteria</taxon>
        <taxon>Pseudomonadati</taxon>
        <taxon>Pseudomonadota</taxon>
        <taxon>Gammaproteobacteria</taxon>
        <taxon>Enterobacterales</taxon>
        <taxon>Enterobacteriaceae</taxon>
        <taxon>Escherichia</taxon>
    </lineage>
</organism>
<accession>B1LEY8</accession>
<proteinExistence type="inferred from homology"/>
<gene>
    <name evidence="1" type="primary">yqhA</name>
    <name type="ordered locus">EcSMS35_3288</name>
</gene>
<feature type="chain" id="PRO_1000197568" description="UPF0114 protein YqhA">
    <location>
        <begin position="1"/>
        <end position="164"/>
    </location>
</feature>
<feature type="transmembrane region" description="Helical" evidence="1">
    <location>
        <begin position="15"/>
        <end position="35"/>
    </location>
</feature>
<feature type="transmembrane region" description="Helical" evidence="1">
    <location>
        <begin position="53"/>
        <end position="73"/>
    </location>
</feature>
<feature type="transmembrane region" description="Helical" evidence="1">
    <location>
        <begin position="136"/>
        <end position="156"/>
    </location>
</feature>
<evidence type="ECO:0000255" key="1">
    <source>
        <dbReference type="HAMAP-Rule" id="MF_00143"/>
    </source>
</evidence>
<sequence>MERFLENAMYASRWLLAPVYFGLSLALVALALKFFQEIIHVLPNIFSMAESDLILVLLSLVDMTLVGGLLVMVMFSGYENFVSQLDISENKEKLNWLGKMDATSLKNKVAASIVAISSIHLLRVFMDAKNVPDNKLMWYVIIHLTFVLSAFVMGYLDRLTRHNH</sequence>
<protein>
    <recommendedName>
        <fullName evidence="1">UPF0114 protein YqhA</fullName>
    </recommendedName>
</protein>
<keyword id="KW-1003">Cell membrane</keyword>
<keyword id="KW-0472">Membrane</keyword>
<keyword id="KW-0812">Transmembrane</keyword>
<keyword id="KW-1133">Transmembrane helix</keyword>
<name>YQHA_ECOSM</name>
<reference key="1">
    <citation type="journal article" date="2008" name="J. Bacteriol.">
        <title>Insights into the environmental resistance gene pool from the genome sequence of the multidrug-resistant environmental isolate Escherichia coli SMS-3-5.</title>
        <authorList>
            <person name="Fricke W.F."/>
            <person name="Wright M.S."/>
            <person name="Lindell A.H."/>
            <person name="Harkins D.M."/>
            <person name="Baker-Austin C."/>
            <person name="Ravel J."/>
            <person name="Stepanauskas R."/>
        </authorList>
    </citation>
    <scope>NUCLEOTIDE SEQUENCE [LARGE SCALE GENOMIC DNA]</scope>
    <source>
        <strain>SMS-3-5 / SECEC</strain>
    </source>
</reference>
<dbReference type="EMBL" id="CP000970">
    <property type="protein sequence ID" value="ACB18792.1"/>
    <property type="molecule type" value="Genomic_DNA"/>
</dbReference>
<dbReference type="RefSeq" id="WP_000439331.1">
    <property type="nucleotide sequence ID" value="NC_010498.1"/>
</dbReference>
<dbReference type="KEGG" id="ecm:EcSMS35_3288"/>
<dbReference type="HOGENOM" id="CLU_097887_1_1_6"/>
<dbReference type="Proteomes" id="UP000007011">
    <property type="component" value="Chromosome"/>
</dbReference>
<dbReference type="GO" id="GO:0005886">
    <property type="term" value="C:plasma membrane"/>
    <property type="evidence" value="ECO:0007669"/>
    <property type="project" value="UniProtKB-SubCell"/>
</dbReference>
<dbReference type="HAMAP" id="MF_00143">
    <property type="entry name" value="UPF0114"/>
    <property type="match status" value="1"/>
</dbReference>
<dbReference type="InterPro" id="IPR005134">
    <property type="entry name" value="UPF0114"/>
</dbReference>
<dbReference type="InterPro" id="IPR020761">
    <property type="entry name" value="UPF0114_bac"/>
</dbReference>
<dbReference type="NCBIfam" id="TIGR00645">
    <property type="entry name" value="HI0507"/>
    <property type="match status" value="1"/>
</dbReference>
<dbReference type="PANTHER" id="PTHR38596">
    <property type="entry name" value="UPF0114 PROTEIN YQHA"/>
    <property type="match status" value="1"/>
</dbReference>
<dbReference type="PANTHER" id="PTHR38596:SF1">
    <property type="entry name" value="UPF0114 PROTEIN YQHA"/>
    <property type="match status" value="1"/>
</dbReference>
<dbReference type="Pfam" id="PF03350">
    <property type="entry name" value="UPF0114"/>
    <property type="match status" value="1"/>
</dbReference>
<comment type="subcellular location">
    <subcellularLocation>
        <location evidence="1">Cell membrane</location>
        <topology evidence="1">Multi-pass membrane protein</topology>
    </subcellularLocation>
</comment>
<comment type="similarity">
    <text evidence="1">Belongs to the UPF0114 family.</text>
</comment>